<organism>
    <name type="scientific">Polaromonas sp. (strain JS666 / ATCC BAA-500)</name>
    <dbReference type="NCBI Taxonomy" id="296591"/>
    <lineage>
        <taxon>Bacteria</taxon>
        <taxon>Pseudomonadati</taxon>
        <taxon>Pseudomonadota</taxon>
        <taxon>Betaproteobacteria</taxon>
        <taxon>Burkholderiales</taxon>
        <taxon>Comamonadaceae</taxon>
        <taxon>Polaromonas</taxon>
    </lineage>
</organism>
<accession>Q122G2</accession>
<evidence type="ECO:0000255" key="1">
    <source>
        <dbReference type="HAMAP-Rule" id="MF_01376"/>
    </source>
</evidence>
<evidence type="ECO:0000305" key="2"/>
<reference key="1">
    <citation type="journal article" date="2008" name="Appl. Environ. Microbiol.">
        <title>The genome of Polaromonas sp. strain JS666: insights into the evolution of a hydrocarbon- and xenobiotic-degrading bacterium, and features of relevance to biotechnology.</title>
        <authorList>
            <person name="Mattes T.E."/>
            <person name="Alexander A.K."/>
            <person name="Richardson P.M."/>
            <person name="Munk A.C."/>
            <person name="Han C.S."/>
            <person name="Stothard P."/>
            <person name="Coleman N.V."/>
        </authorList>
    </citation>
    <scope>NUCLEOTIDE SEQUENCE [LARGE SCALE GENOMIC DNA]</scope>
    <source>
        <strain>JS666 / ATCC BAA-500</strain>
    </source>
</reference>
<dbReference type="EC" id="2.6.1.37" evidence="1"/>
<dbReference type="EMBL" id="CP000316">
    <property type="protein sequence ID" value="ABE46580.1"/>
    <property type="molecule type" value="Genomic_DNA"/>
</dbReference>
<dbReference type="RefSeq" id="WP_011485567.1">
    <property type="nucleotide sequence ID" value="NC_007948.1"/>
</dbReference>
<dbReference type="SMR" id="Q122G2"/>
<dbReference type="STRING" id="296591.Bpro_4697"/>
<dbReference type="KEGG" id="pol:Bpro_4697"/>
<dbReference type="eggNOG" id="COG0075">
    <property type="taxonomic scope" value="Bacteria"/>
</dbReference>
<dbReference type="HOGENOM" id="CLU_027686_3_1_4"/>
<dbReference type="OrthoDB" id="9766472at2"/>
<dbReference type="Proteomes" id="UP000001983">
    <property type="component" value="Chromosome"/>
</dbReference>
<dbReference type="GO" id="GO:0047304">
    <property type="term" value="F:2-aminoethylphosphonate-pyruvate transaminase activity"/>
    <property type="evidence" value="ECO:0007669"/>
    <property type="project" value="UniProtKB-UniRule"/>
</dbReference>
<dbReference type="GO" id="GO:0019700">
    <property type="term" value="P:organic phosphonate catabolic process"/>
    <property type="evidence" value="ECO:0007669"/>
    <property type="project" value="InterPro"/>
</dbReference>
<dbReference type="Gene3D" id="3.90.1150.10">
    <property type="entry name" value="Aspartate Aminotransferase, domain 1"/>
    <property type="match status" value="1"/>
</dbReference>
<dbReference type="Gene3D" id="3.40.640.10">
    <property type="entry name" value="Type I PLP-dependent aspartate aminotransferase-like (Major domain)"/>
    <property type="match status" value="1"/>
</dbReference>
<dbReference type="HAMAP" id="MF_01376">
    <property type="entry name" value="PhnW_aminotrans_5"/>
    <property type="match status" value="1"/>
</dbReference>
<dbReference type="InterPro" id="IPR000192">
    <property type="entry name" value="Aminotrans_V_dom"/>
</dbReference>
<dbReference type="InterPro" id="IPR012703">
    <property type="entry name" value="NH2EtPonate_pyrv_transaminase"/>
</dbReference>
<dbReference type="InterPro" id="IPR015424">
    <property type="entry name" value="PyrdxlP-dep_Trfase"/>
</dbReference>
<dbReference type="InterPro" id="IPR015421">
    <property type="entry name" value="PyrdxlP-dep_Trfase_major"/>
</dbReference>
<dbReference type="InterPro" id="IPR015422">
    <property type="entry name" value="PyrdxlP-dep_Trfase_small"/>
</dbReference>
<dbReference type="InterPro" id="IPR024169">
    <property type="entry name" value="SP_NH2Trfase/AEP_transaminase"/>
</dbReference>
<dbReference type="NCBIfam" id="TIGR03301">
    <property type="entry name" value="PhnW-AepZ"/>
    <property type="match status" value="1"/>
</dbReference>
<dbReference type="NCBIfam" id="NF010006">
    <property type="entry name" value="PRK13479.1"/>
    <property type="match status" value="1"/>
</dbReference>
<dbReference type="NCBIfam" id="TIGR02326">
    <property type="entry name" value="transamin_PhnW"/>
    <property type="match status" value="1"/>
</dbReference>
<dbReference type="PANTHER" id="PTHR42778">
    <property type="entry name" value="2-AMINOETHYLPHOSPHONATE--PYRUVATE TRANSAMINASE"/>
    <property type="match status" value="1"/>
</dbReference>
<dbReference type="PANTHER" id="PTHR42778:SF1">
    <property type="entry name" value="2-AMINOETHYLPHOSPHONATE--PYRUVATE TRANSAMINASE"/>
    <property type="match status" value="1"/>
</dbReference>
<dbReference type="Pfam" id="PF00266">
    <property type="entry name" value="Aminotran_5"/>
    <property type="match status" value="1"/>
</dbReference>
<dbReference type="PIRSF" id="PIRSF000524">
    <property type="entry name" value="SPT"/>
    <property type="match status" value="1"/>
</dbReference>
<dbReference type="SUPFAM" id="SSF53383">
    <property type="entry name" value="PLP-dependent transferases"/>
    <property type="match status" value="1"/>
</dbReference>
<keyword id="KW-0032">Aminotransferase</keyword>
<keyword id="KW-0663">Pyridoxal phosphate</keyword>
<keyword id="KW-0670">Pyruvate</keyword>
<keyword id="KW-1185">Reference proteome</keyword>
<keyword id="KW-0808">Transferase</keyword>
<proteinExistence type="inferred from homology"/>
<protein>
    <recommendedName>
        <fullName evidence="1">2-aminoethylphosphonate--pyruvate transaminase 2</fullName>
        <ecNumber evidence="1">2.6.1.37</ecNumber>
    </recommendedName>
    <alternativeName>
        <fullName evidence="1">2-aminoethylphosphonate aminotransferase 2</fullName>
    </alternativeName>
    <alternativeName>
        <fullName evidence="1">AEP transaminase 2</fullName>
        <shortName evidence="1">AEPT 2</shortName>
    </alternativeName>
</protein>
<feature type="chain" id="PRO_0000286772" description="2-aminoethylphosphonate--pyruvate transaminase 2">
    <location>
        <begin position="1"/>
        <end position="372"/>
    </location>
</feature>
<feature type="modified residue" description="N6-(pyridoxal phosphate)lysine" evidence="1">
    <location>
        <position position="192"/>
    </location>
</feature>
<name>PHNW2_POLSJ</name>
<comment type="function">
    <text evidence="1">Involved in phosphonate degradation.</text>
</comment>
<comment type="catalytic activity">
    <reaction evidence="1">
        <text>(2-aminoethyl)phosphonate + pyruvate = phosphonoacetaldehyde + L-alanine</text>
        <dbReference type="Rhea" id="RHEA:17021"/>
        <dbReference type="ChEBI" id="CHEBI:15361"/>
        <dbReference type="ChEBI" id="CHEBI:57418"/>
        <dbReference type="ChEBI" id="CHEBI:57972"/>
        <dbReference type="ChEBI" id="CHEBI:58383"/>
        <dbReference type="EC" id="2.6.1.37"/>
    </reaction>
</comment>
<comment type="cofactor">
    <cofactor evidence="1">
        <name>pyridoxal 5'-phosphate</name>
        <dbReference type="ChEBI" id="CHEBI:597326"/>
    </cofactor>
</comment>
<comment type="subunit">
    <text evidence="1">Homodimer.</text>
</comment>
<comment type="similarity">
    <text evidence="1">Belongs to the class-V pyridoxal-phosphate-dependent aminotransferase family. PhnW subfamily.</text>
</comment>
<comment type="caution">
    <text evidence="2">The second enzyme involved in phosphonate degradation (PhnX, EC 3.11.1.1) is not found in this organism. The function of this enzyme is therefore uncertain.</text>
</comment>
<sequence>MDRDKILLTPGPLTTTLRTKLAMLKDWGSWDTDFNAVTASVRRSLLDIIHGHDSHVVVPLQGSGTFSVEAAVATLVPHDGHVLVLDNGAYCKRAVRLTQLMGRRCTVLPFDEAAPVSAAALADQLKADASISHVILIHCETGAGVLNPLQEVADVCAAHGKGLIVDAMSSFAALEIDARKVRFDALVAASGKCLEGVPGMGFVFIRKAILEGCAGRSQSLAMDLYDQYIYMEKTTQWRFTPPTHVVVALAEAIAQFEEEGGQPARLARYQRNYSTLITGMARLGFRPFLDPAIQAPIIVTFHAPADSRYEFKRFYASARERGFVLYPGKLTQVETFRVGCIGAIGPREMEQAVHAIAGALQDMGISSAAPAH</sequence>
<gene>
    <name evidence="1" type="primary">phnW2</name>
    <name type="ordered locus">Bpro_4697</name>
</gene>